<feature type="chain" id="PRO_0000366487" description="Ribosomal RNA large subunit methyltransferase G">
    <location>
        <begin position="1"/>
        <end position="374"/>
    </location>
</feature>
<comment type="function">
    <text evidence="1">Specifically methylates the guanine in position 1835 (m2G1835) of 23S rRNA.</text>
</comment>
<comment type="catalytic activity">
    <reaction evidence="1">
        <text>guanosine(1835) in 23S rRNA + S-adenosyl-L-methionine = N(2)-methylguanosine(1835) in 23S rRNA + S-adenosyl-L-homocysteine + H(+)</text>
        <dbReference type="Rhea" id="RHEA:42744"/>
        <dbReference type="Rhea" id="RHEA-COMP:10217"/>
        <dbReference type="Rhea" id="RHEA-COMP:10218"/>
        <dbReference type="ChEBI" id="CHEBI:15378"/>
        <dbReference type="ChEBI" id="CHEBI:57856"/>
        <dbReference type="ChEBI" id="CHEBI:59789"/>
        <dbReference type="ChEBI" id="CHEBI:74269"/>
        <dbReference type="ChEBI" id="CHEBI:74481"/>
        <dbReference type="EC" id="2.1.1.174"/>
    </reaction>
</comment>
<comment type="subcellular location">
    <subcellularLocation>
        <location evidence="1">Cytoplasm</location>
    </subcellularLocation>
</comment>
<comment type="similarity">
    <text evidence="1">Belongs to the methyltransferase superfamily. RlmG family.</text>
</comment>
<organism>
    <name type="scientific">Pseudomonas syringae pv. tomato (strain ATCC BAA-871 / DC3000)</name>
    <dbReference type="NCBI Taxonomy" id="223283"/>
    <lineage>
        <taxon>Bacteria</taxon>
        <taxon>Pseudomonadati</taxon>
        <taxon>Pseudomonadota</taxon>
        <taxon>Gammaproteobacteria</taxon>
        <taxon>Pseudomonadales</taxon>
        <taxon>Pseudomonadaceae</taxon>
        <taxon>Pseudomonas</taxon>
    </lineage>
</organism>
<evidence type="ECO:0000255" key="1">
    <source>
        <dbReference type="HAMAP-Rule" id="MF_01859"/>
    </source>
</evidence>
<proteinExistence type="inferred from homology"/>
<keyword id="KW-0963">Cytoplasm</keyword>
<keyword id="KW-0489">Methyltransferase</keyword>
<keyword id="KW-1185">Reference proteome</keyword>
<keyword id="KW-0698">rRNA processing</keyword>
<keyword id="KW-0949">S-adenosyl-L-methionine</keyword>
<keyword id="KW-0808">Transferase</keyword>
<gene>
    <name evidence="1" type="primary">rlmG</name>
    <name type="ordered locus">PSPTO_4645</name>
</gene>
<sequence>MPLLISRFAELDLIRQPEQQDEPLQAFDAADEYLLSHVAETGLSLDSRVLVLNDSFGALAASLARHANVVSSTDSFLAAQGLEKNLARNGMAYDAVPLIPASEPLSGPFDWVLIRIPKTLALLEEQLIRLQGQLAPGARVVAAAMVKHLPRSAGDLLEEYVGPVQASLAVKKARLLFATPRPQEVRTSPYPTRYTLDEPAIELLNHANVFCRDGLDIGTRALLPCLPKNLGAARVADLGCGNGVLAIASALENPDAHYTLVDESYMAVQSATENWRAHLGERDVVLRAADGLDTQQPDSLDVVLCNPPFHQQQVVGDFLAWRMFLQARAALVTGGALYIVGNRHLGYHTKLSRLFRGVEQVAATPKFVILKARK</sequence>
<accession>Q87WA9</accession>
<reference key="1">
    <citation type="journal article" date="2003" name="Proc. Natl. Acad. Sci. U.S.A.">
        <title>The complete genome sequence of the Arabidopsis and tomato pathogen Pseudomonas syringae pv. tomato DC3000.</title>
        <authorList>
            <person name="Buell C.R."/>
            <person name="Joardar V."/>
            <person name="Lindeberg M."/>
            <person name="Selengut J."/>
            <person name="Paulsen I.T."/>
            <person name="Gwinn M.L."/>
            <person name="Dodson R.J."/>
            <person name="DeBoy R.T."/>
            <person name="Durkin A.S."/>
            <person name="Kolonay J.F."/>
            <person name="Madupu R."/>
            <person name="Daugherty S.C."/>
            <person name="Brinkac L.M."/>
            <person name="Beanan M.J."/>
            <person name="Haft D.H."/>
            <person name="Nelson W.C."/>
            <person name="Davidsen T.M."/>
            <person name="Zafar N."/>
            <person name="Zhou L."/>
            <person name="Liu J."/>
            <person name="Yuan Q."/>
            <person name="Khouri H.M."/>
            <person name="Fedorova N.B."/>
            <person name="Tran B."/>
            <person name="Russell D."/>
            <person name="Berry K.J."/>
            <person name="Utterback T.R."/>
            <person name="Van Aken S.E."/>
            <person name="Feldblyum T.V."/>
            <person name="D'Ascenzo M."/>
            <person name="Deng W.-L."/>
            <person name="Ramos A.R."/>
            <person name="Alfano J.R."/>
            <person name="Cartinhour S."/>
            <person name="Chatterjee A.K."/>
            <person name="Delaney T.P."/>
            <person name="Lazarowitz S.G."/>
            <person name="Martin G.B."/>
            <person name="Schneider D.J."/>
            <person name="Tang X."/>
            <person name="Bender C.L."/>
            <person name="White O."/>
            <person name="Fraser C.M."/>
            <person name="Collmer A."/>
        </authorList>
    </citation>
    <scope>NUCLEOTIDE SEQUENCE [LARGE SCALE GENOMIC DNA]</scope>
    <source>
        <strain>ATCC BAA-871 / DC3000</strain>
    </source>
</reference>
<dbReference type="EC" id="2.1.1.174" evidence="1"/>
<dbReference type="EMBL" id="AE016853">
    <property type="protein sequence ID" value="AAO58091.1"/>
    <property type="molecule type" value="Genomic_DNA"/>
</dbReference>
<dbReference type="RefSeq" id="NP_794396.1">
    <property type="nucleotide sequence ID" value="NC_004578.1"/>
</dbReference>
<dbReference type="RefSeq" id="WP_005770191.1">
    <property type="nucleotide sequence ID" value="NC_004578.1"/>
</dbReference>
<dbReference type="SMR" id="Q87WA9"/>
<dbReference type="STRING" id="223283.PSPTO_4645"/>
<dbReference type="GeneID" id="1186328"/>
<dbReference type="KEGG" id="pst:PSPTO_4645"/>
<dbReference type="PATRIC" id="fig|223283.9.peg.4760"/>
<dbReference type="eggNOG" id="COG2813">
    <property type="taxonomic scope" value="Bacteria"/>
</dbReference>
<dbReference type="HOGENOM" id="CLU_040288_4_0_6"/>
<dbReference type="OrthoDB" id="29650at2"/>
<dbReference type="PhylomeDB" id="Q87WA9"/>
<dbReference type="Proteomes" id="UP000002515">
    <property type="component" value="Chromosome"/>
</dbReference>
<dbReference type="GO" id="GO:0005737">
    <property type="term" value="C:cytoplasm"/>
    <property type="evidence" value="ECO:0007669"/>
    <property type="project" value="UniProtKB-SubCell"/>
</dbReference>
<dbReference type="GO" id="GO:0052916">
    <property type="term" value="F:23S rRNA (guanine(1835)-N(2))-methyltransferase activity"/>
    <property type="evidence" value="ECO:0007669"/>
    <property type="project" value="UniProtKB-EC"/>
</dbReference>
<dbReference type="GO" id="GO:0003676">
    <property type="term" value="F:nucleic acid binding"/>
    <property type="evidence" value="ECO:0007669"/>
    <property type="project" value="InterPro"/>
</dbReference>
<dbReference type="CDD" id="cd02440">
    <property type="entry name" value="AdoMet_MTases"/>
    <property type="match status" value="1"/>
</dbReference>
<dbReference type="Gene3D" id="3.40.50.150">
    <property type="entry name" value="Vaccinia Virus protein VP39"/>
    <property type="match status" value="2"/>
</dbReference>
<dbReference type="HAMAP" id="MF_01859">
    <property type="entry name" value="23SrRNA_methyltr_G"/>
    <property type="match status" value="1"/>
</dbReference>
<dbReference type="InterPro" id="IPR002052">
    <property type="entry name" value="DNA_methylase_N6_adenine_CS"/>
</dbReference>
<dbReference type="InterPro" id="IPR017237">
    <property type="entry name" value="rRNA_m2G-MeTrfase_RlmG"/>
</dbReference>
<dbReference type="InterPro" id="IPR046977">
    <property type="entry name" value="RsmC/RlmG"/>
</dbReference>
<dbReference type="InterPro" id="IPR029063">
    <property type="entry name" value="SAM-dependent_MTases_sf"/>
</dbReference>
<dbReference type="InterPro" id="IPR007848">
    <property type="entry name" value="Small_mtfrase_dom"/>
</dbReference>
<dbReference type="PANTHER" id="PTHR47816:SF5">
    <property type="entry name" value="RIBOSOMAL RNA LARGE SUBUNIT METHYLTRANSFERASE G"/>
    <property type="match status" value="1"/>
</dbReference>
<dbReference type="PANTHER" id="PTHR47816">
    <property type="entry name" value="RIBOSOMAL RNA SMALL SUBUNIT METHYLTRANSFERASE C"/>
    <property type="match status" value="1"/>
</dbReference>
<dbReference type="Pfam" id="PF05175">
    <property type="entry name" value="MTS"/>
    <property type="match status" value="1"/>
</dbReference>
<dbReference type="PIRSF" id="PIRSF037565">
    <property type="entry name" value="RRNA_m2G_Mtase_RsmD_prd"/>
    <property type="match status" value="1"/>
</dbReference>
<dbReference type="SUPFAM" id="SSF53335">
    <property type="entry name" value="S-adenosyl-L-methionine-dependent methyltransferases"/>
    <property type="match status" value="1"/>
</dbReference>
<protein>
    <recommendedName>
        <fullName evidence="1">Ribosomal RNA large subunit methyltransferase G</fullName>
        <ecNumber evidence="1">2.1.1.174</ecNumber>
    </recommendedName>
    <alternativeName>
        <fullName evidence="1">23S rRNA m2G1835 methyltransferase</fullName>
    </alternativeName>
    <alternativeName>
        <fullName evidence="1">rRNA (guanine-N(2)-)-methyltransferase RlmG</fullName>
    </alternativeName>
</protein>
<name>RLMG_PSESM</name>